<proteinExistence type="evidence at transcript level"/>
<feature type="initiator methionine" description="Removed" evidence="3">
    <location>
        <position position="1"/>
    </location>
</feature>
<feature type="chain" id="PRO_0000261313" description="Proteasome inhibitor PI31 subunit">
    <location>
        <begin position="2"/>
        <end position="270"/>
    </location>
</feature>
<feature type="region of interest" description="Important for homodimerization and interaction with FBXO7" evidence="1">
    <location>
        <begin position="2"/>
        <end position="150"/>
    </location>
</feature>
<feature type="region of interest" description="Disordered" evidence="4">
    <location>
        <begin position="220"/>
        <end position="270"/>
    </location>
</feature>
<feature type="compositionally biased region" description="Pro residues" evidence="4">
    <location>
        <begin position="254"/>
        <end position="264"/>
    </location>
</feature>
<feature type="modified residue" description="N-acetylalanine" evidence="3">
    <location>
        <position position="2"/>
    </location>
</feature>
<feature type="modified residue" description="Phosphoserine" evidence="3">
    <location>
        <position position="152"/>
    </location>
</feature>
<feature type="modified residue" description="Omega-N-methylarginine" evidence="2">
    <location>
        <position position="204"/>
    </location>
</feature>
<feature type="modified residue" description="Asymmetric dimethylarginine" evidence="2">
    <location>
        <position position="218"/>
    </location>
</feature>
<feature type="modified residue" description="Omega-N-methylarginine" evidence="3">
    <location>
        <position position="230"/>
    </location>
</feature>
<feature type="modified residue" description="Phosphoserine" evidence="3">
    <location>
        <position position="251"/>
    </location>
</feature>
<feature type="sequence conflict" description="In Ref. 2; AAI04536." evidence="5" ref="2">
    <original>R</original>
    <variation>W</variation>
    <location>
        <position position="203"/>
    </location>
</feature>
<sequence length="270" mass="29705">MAGLEVLFASAAPAITCAQDALVCFLHWEVVTHGYYGLGAGDQPGPNDKKSELLPVEWNSNKDLYVLRYESKDGSRKLLVKAVTVENSMIINVLEHGSQQVSDLTLNLNDYIDSEHLVDFHRVYKNSEELRSRIVSGIITPIHEQWEKANLSPHREFPPATAREVDPLRIHPQHPHTSRQPTWCDPLGPFAVGGEDLDPFGCRRGGMIVDPLRSGFPRALIDPSSGLPNRLPPGAVPPGARFDPFGPIGTSPSGPNPDHLPPPGYDDMYL</sequence>
<organism>
    <name type="scientific">Bos taurus</name>
    <name type="common">Bovine</name>
    <dbReference type="NCBI Taxonomy" id="9913"/>
    <lineage>
        <taxon>Eukaryota</taxon>
        <taxon>Metazoa</taxon>
        <taxon>Chordata</taxon>
        <taxon>Craniata</taxon>
        <taxon>Vertebrata</taxon>
        <taxon>Euteleostomi</taxon>
        <taxon>Mammalia</taxon>
        <taxon>Eutheria</taxon>
        <taxon>Laurasiatheria</taxon>
        <taxon>Artiodactyla</taxon>
        <taxon>Ruminantia</taxon>
        <taxon>Pecora</taxon>
        <taxon>Bovidae</taxon>
        <taxon>Bovinae</taxon>
        <taxon>Bos</taxon>
    </lineage>
</organism>
<reference key="1">
    <citation type="journal article" date="2005" name="BMC Genomics">
        <title>Characterization of 954 bovine full-CDS cDNA sequences.</title>
        <authorList>
            <person name="Harhay G.P."/>
            <person name="Sonstegard T.S."/>
            <person name="Keele J.W."/>
            <person name="Heaton M.P."/>
            <person name="Clawson M.L."/>
            <person name="Snelling W.M."/>
            <person name="Wiedmann R.T."/>
            <person name="Van Tassell C.P."/>
            <person name="Smith T.P.L."/>
        </authorList>
    </citation>
    <scope>NUCLEOTIDE SEQUENCE [LARGE SCALE MRNA]</scope>
</reference>
<reference key="2">
    <citation type="submission" date="2005-09" db="EMBL/GenBank/DDBJ databases">
        <authorList>
            <consortium name="NIH - Mammalian Gene Collection (MGC) project"/>
        </authorList>
    </citation>
    <scope>NUCLEOTIDE SEQUENCE [LARGE SCALE MRNA]</scope>
    <source>
        <strain>Hereford</strain>
        <tissue>Uterus</tissue>
    </source>
</reference>
<comment type="function">
    <text evidence="1">Plays an important role in control of proteasome function. Inhibits the hydrolysis of protein and peptide substrates by the 20S proteasome. Also inhibits the activation of the proteasome by the proteasome regulatory proteins PA700 and PA28 (By similarity).</text>
</comment>
<comment type="subunit">
    <text evidence="1">Monomer and homodimer. Interacts with FBXO7 (By similarity).</text>
</comment>
<comment type="subcellular location">
    <subcellularLocation>
        <location evidence="1">Cytoplasm</location>
    </subcellularLocation>
    <subcellularLocation>
        <location evidence="1">Endoplasmic reticulum</location>
    </subcellularLocation>
</comment>
<comment type="similarity">
    <text evidence="5">Belongs to the proteasome inhibitor PI31 family.</text>
</comment>
<evidence type="ECO:0000250" key="1"/>
<evidence type="ECO:0000250" key="2">
    <source>
        <dbReference type="UniProtKB" id="Q8BHL8"/>
    </source>
</evidence>
<evidence type="ECO:0000250" key="3">
    <source>
        <dbReference type="UniProtKB" id="Q92530"/>
    </source>
</evidence>
<evidence type="ECO:0000256" key="4">
    <source>
        <dbReference type="SAM" id="MobiDB-lite"/>
    </source>
</evidence>
<evidence type="ECO:0000305" key="5"/>
<accession>Q3SX30</accession>
<accession>Q1JPI8</accession>
<name>PSMF1_BOVIN</name>
<protein>
    <recommendedName>
        <fullName>Proteasome inhibitor PI31 subunit</fullName>
    </recommendedName>
</protein>
<dbReference type="EMBL" id="BT025365">
    <property type="protein sequence ID" value="ABF57321.1"/>
    <property type="molecule type" value="mRNA"/>
</dbReference>
<dbReference type="EMBL" id="BC104535">
    <property type="protein sequence ID" value="AAI04536.1"/>
    <property type="molecule type" value="mRNA"/>
</dbReference>
<dbReference type="RefSeq" id="NP_001069946.1">
    <property type="nucleotide sequence ID" value="NM_001076478.1"/>
</dbReference>
<dbReference type="EMDB" id="EMD-29604"/>
<dbReference type="SMR" id="Q3SX30"/>
<dbReference type="FunCoup" id="Q3SX30">
    <property type="interactions" value="3501"/>
</dbReference>
<dbReference type="STRING" id="9913.ENSBTAP00000024505"/>
<dbReference type="PaxDb" id="9913-ENSBTAP00000024505"/>
<dbReference type="Ensembl" id="ENSBTAT00000024505.5">
    <property type="protein sequence ID" value="ENSBTAP00000024505.4"/>
    <property type="gene ID" value="ENSBTAG00000018417.6"/>
</dbReference>
<dbReference type="GeneID" id="617807"/>
<dbReference type="KEGG" id="bta:617807"/>
<dbReference type="CTD" id="9491"/>
<dbReference type="VEuPathDB" id="HostDB:ENSBTAG00000018417"/>
<dbReference type="VGNC" id="VGNC:33477">
    <property type="gene designation" value="PSMF1"/>
</dbReference>
<dbReference type="eggNOG" id="KOG4761">
    <property type="taxonomic scope" value="Eukaryota"/>
</dbReference>
<dbReference type="GeneTree" id="ENSGT00390000012257"/>
<dbReference type="HOGENOM" id="CLU_090116_0_0_1"/>
<dbReference type="InParanoid" id="Q3SX30"/>
<dbReference type="OMA" id="PFGFPDI"/>
<dbReference type="OrthoDB" id="68090at2759"/>
<dbReference type="TreeFam" id="TF106238"/>
<dbReference type="Proteomes" id="UP000009136">
    <property type="component" value="Chromosome 13"/>
</dbReference>
<dbReference type="Bgee" id="ENSBTAG00000018417">
    <property type="expression patterns" value="Expressed in choroid plexus and 108 other cell types or tissues"/>
</dbReference>
<dbReference type="GO" id="GO:0005829">
    <property type="term" value="C:cytosol"/>
    <property type="evidence" value="ECO:0000250"/>
    <property type="project" value="UniProtKB"/>
</dbReference>
<dbReference type="GO" id="GO:0005783">
    <property type="term" value="C:endoplasmic reticulum"/>
    <property type="evidence" value="ECO:0000250"/>
    <property type="project" value="UniProtKB"/>
</dbReference>
<dbReference type="GO" id="GO:0048471">
    <property type="term" value="C:perinuclear region of cytoplasm"/>
    <property type="evidence" value="ECO:0007669"/>
    <property type="project" value="Ensembl"/>
</dbReference>
<dbReference type="GO" id="GO:0000502">
    <property type="term" value="C:proteasome complex"/>
    <property type="evidence" value="ECO:0007669"/>
    <property type="project" value="UniProtKB-KW"/>
</dbReference>
<dbReference type="GO" id="GO:0004866">
    <property type="term" value="F:endopeptidase inhibitor activity"/>
    <property type="evidence" value="ECO:0007669"/>
    <property type="project" value="InterPro"/>
</dbReference>
<dbReference type="GO" id="GO:0070628">
    <property type="term" value="F:proteasome binding"/>
    <property type="evidence" value="ECO:0000250"/>
    <property type="project" value="UniProtKB"/>
</dbReference>
<dbReference type="GO" id="GO:0046982">
    <property type="term" value="F:protein heterodimerization activity"/>
    <property type="evidence" value="ECO:0007669"/>
    <property type="project" value="Ensembl"/>
</dbReference>
<dbReference type="GO" id="GO:0042803">
    <property type="term" value="F:protein homodimerization activity"/>
    <property type="evidence" value="ECO:0007669"/>
    <property type="project" value="Ensembl"/>
</dbReference>
<dbReference type="GO" id="GO:1901799">
    <property type="term" value="P:negative regulation of proteasomal protein catabolic process"/>
    <property type="evidence" value="ECO:0000250"/>
    <property type="project" value="UniProtKB"/>
</dbReference>
<dbReference type="GO" id="GO:0043161">
    <property type="term" value="P:proteasome-mediated ubiquitin-dependent protein catabolic process"/>
    <property type="evidence" value="ECO:0007669"/>
    <property type="project" value="InterPro"/>
</dbReference>
<dbReference type="GO" id="GO:0006511">
    <property type="term" value="P:ubiquitin-dependent protein catabolic process"/>
    <property type="evidence" value="ECO:0000250"/>
    <property type="project" value="UniProtKB"/>
</dbReference>
<dbReference type="FunFam" id="3.40.1000.30:FF:000002">
    <property type="entry name" value="Proteasome inhibitor PI31 subunit"/>
    <property type="match status" value="1"/>
</dbReference>
<dbReference type="Gene3D" id="3.40.1000.30">
    <property type="match status" value="1"/>
</dbReference>
<dbReference type="InterPro" id="IPR045128">
    <property type="entry name" value="PI31-like"/>
</dbReference>
<dbReference type="InterPro" id="IPR013886">
    <property type="entry name" value="PI31_Prot_C"/>
</dbReference>
<dbReference type="InterPro" id="IPR021625">
    <property type="entry name" value="PI31_Prot_N"/>
</dbReference>
<dbReference type="PANTHER" id="PTHR13266">
    <property type="entry name" value="PROTEASOME INHIBITOR"/>
    <property type="match status" value="1"/>
</dbReference>
<dbReference type="PANTHER" id="PTHR13266:SF1">
    <property type="entry name" value="PROTEASOME INHIBITOR PI31 SUBUNIT"/>
    <property type="match status" value="1"/>
</dbReference>
<dbReference type="Pfam" id="PF08577">
    <property type="entry name" value="PI31_Prot_C"/>
    <property type="match status" value="1"/>
</dbReference>
<dbReference type="Pfam" id="PF11566">
    <property type="entry name" value="PI31_Prot_N"/>
    <property type="match status" value="1"/>
</dbReference>
<keyword id="KW-0007">Acetylation</keyword>
<keyword id="KW-0963">Cytoplasm</keyword>
<keyword id="KW-0256">Endoplasmic reticulum</keyword>
<keyword id="KW-0488">Methylation</keyword>
<keyword id="KW-0597">Phosphoprotein</keyword>
<keyword id="KW-0647">Proteasome</keyword>
<keyword id="KW-1185">Reference proteome</keyword>
<gene>
    <name type="primary">PSMF1</name>
</gene>